<feature type="chain" id="PRO_0000162431" description="Regulatory protein RecX">
    <location>
        <begin position="1"/>
        <end position="166"/>
    </location>
</feature>
<feature type="helix" evidence="3">
    <location>
        <begin position="9"/>
        <end position="22"/>
    </location>
</feature>
<feature type="helix" evidence="3">
    <location>
        <begin position="29"/>
        <end position="37"/>
    </location>
</feature>
<feature type="strand" evidence="3">
    <location>
        <begin position="40"/>
        <end position="42"/>
    </location>
</feature>
<feature type="strand" evidence="3">
    <location>
        <begin position="45"/>
        <end position="47"/>
    </location>
</feature>
<feature type="helix" evidence="3">
    <location>
        <begin position="53"/>
        <end position="65"/>
    </location>
</feature>
<feature type="helix" evidence="3">
    <location>
        <begin position="71"/>
        <end position="84"/>
    </location>
</feature>
<feature type="helix" evidence="3">
    <location>
        <begin position="89"/>
        <end position="98"/>
    </location>
</feature>
<feature type="helix" evidence="3">
    <location>
        <begin position="103"/>
        <end position="113"/>
    </location>
</feature>
<feature type="helix" evidence="3">
    <location>
        <begin position="117"/>
        <end position="129"/>
    </location>
</feature>
<feature type="helix" evidence="3">
    <location>
        <begin position="137"/>
        <end position="149"/>
    </location>
</feature>
<feature type="helix" evidence="3">
    <location>
        <begin position="154"/>
        <end position="157"/>
    </location>
</feature>
<organism>
    <name type="scientific">Escherichia coli O157:H7</name>
    <dbReference type="NCBI Taxonomy" id="83334"/>
    <lineage>
        <taxon>Bacteria</taxon>
        <taxon>Pseudomonadati</taxon>
        <taxon>Pseudomonadota</taxon>
        <taxon>Gammaproteobacteria</taxon>
        <taxon>Enterobacterales</taxon>
        <taxon>Enterobacteriaceae</taxon>
        <taxon>Escherichia</taxon>
    </lineage>
</organism>
<accession>P66000</accession>
<accession>P59208</accession>
<accession>Q8X875</accession>
<proteinExistence type="evidence at protein level"/>
<evidence type="ECO:0000250" key="1"/>
<evidence type="ECO:0000305" key="2"/>
<evidence type="ECO:0007829" key="3">
    <source>
        <dbReference type="PDB" id="3C1D"/>
    </source>
</evidence>
<sequence>MTESTSRRPAYARLLDRAVRILAVRDHSEQELRRKLAAPIMGKNGPEEIDATAEDYERVIAWCHEHGYLDDSRFVARFIASRSRKGYGPARIRQELNQKGISREATEKAMRECDIDWCALARDQATRKYGEPLPTVFSEKVKIQRFLLYRGYLMEDIQDIWRNFAD</sequence>
<name>RECX_ECO57</name>
<dbReference type="EMBL" id="AE005174">
    <property type="protein sequence ID" value="AAG57803.1"/>
    <property type="molecule type" value="Genomic_DNA"/>
</dbReference>
<dbReference type="EMBL" id="BA000007">
    <property type="protein sequence ID" value="BAB36978.1"/>
    <property type="molecule type" value="Genomic_DNA"/>
</dbReference>
<dbReference type="PIR" id="C91073">
    <property type="entry name" value="C91073"/>
</dbReference>
<dbReference type="PIR" id="G85917">
    <property type="entry name" value="G85917"/>
</dbReference>
<dbReference type="RefSeq" id="NP_311582.1">
    <property type="nucleotide sequence ID" value="NC_002695.1"/>
</dbReference>
<dbReference type="RefSeq" id="WP_000140506.1">
    <property type="nucleotide sequence ID" value="NZ_VOAI01000003.1"/>
</dbReference>
<dbReference type="PDB" id="3C1D">
    <property type="method" value="X-ray"/>
    <property type="resolution" value="1.80 A"/>
    <property type="chains" value="A/B=9-166"/>
</dbReference>
<dbReference type="PDBsum" id="3C1D"/>
<dbReference type="SMR" id="P66000"/>
<dbReference type="STRING" id="155864.Z4001"/>
<dbReference type="GeneID" id="75172780"/>
<dbReference type="GeneID" id="914723"/>
<dbReference type="KEGG" id="ece:Z4001"/>
<dbReference type="KEGG" id="ecs:ECs_3555"/>
<dbReference type="PATRIC" id="fig|386585.9.peg.3713"/>
<dbReference type="eggNOG" id="COG2137">
    <property type="taxonomic scope" value="Bacteria"/>
</dbReference>
<dbReference type="HOGENOM" id="CLU_066607_3_2_6"/>
<dbReference type="OMA" id="EPQDWFE"/>
<dbReference type="EvolutionaryTrace" id="P66000"/>
<dbReference type="Proteomes" id="UP000000558">
    <property type="component" value="Chromosome"/>
</dbReference>
<dbReference type="Proteomes" id="UP000002519">
    <property type="component" value="Chromosome"/>
</dbReference>
<dbReference type="GO" id="GO:0005737">
    <property type="term" value="C:cytoplasm"/>
    <property type="evidence" value="ECO:0007669"/>
    <property type="project" value="UniProtKB-SubCell"/>
</dbReference>
<dbReference type="GO" id="GO:0006281">
    <property type="term" value="P:DNA repair"/>
    <property type="evidence" value="ECO:0007669"/>
    <property type="project" value="UniProtKB-KW"/>
</dbReference>
<dbReference type="GO" id="GO:0006282">
    <property type="term" value="P:regulation of DNA repair"/>
    <property type="evidence" value="ECO:0007669"/>
    <property type="project" value="UniProtKB-UniRule"/>
</dbReference>
<dbReference type="GO" id="GO:0009432">
    <property type="term" value="P:SOS response"/>
    <property type="evidence" value="ECO:0007669"/>
    <property type="project" value="UniProtKB-KW"/>
</dbReference>
<dbReference type="FunFam" id="1.10.10.10:FF:000133">
    <property type="entry name" value="Regulatory protein RecX"/>
    <property type="match status" value="1"/>
</dbReference>
<dbReference type="FunFam" id="1.10.10.10:FF:000134">
    <property type="entry name" value="Regulatory protein RecX"/>
    <property type="match status" value="1"/>
</dbReference>
<dbReference type="FunFam" id="1.10.10.10:FF:000209">
    <property type="entry name" value="Regulatory protein RecX"/>
    <property type="match status" value="1"/>
</dbReference>
<dbReference type="Gene3D" id="1.10.10.10">
    <property type="entry name" value="Winged helix-like DNA-binding domain superfamily/Winged helix DNA-binding domain"/>
    <property type="match status" value="3"/>
</dbReference>
<dbReference type="HAMAP" id="MF_01114">
    <property type="entry name" value="RecX"/>
    <property type="match status" value="1"/>
</dbReference>
<dbReference type="InterPro" id="IPR053926">
    <property type="entry name" value="RecX_HTH_1st"/>
</dbReference>
<dbReference type="InterPro" id="IPR053924">
    <property type="entry name" value="RecX_HTH_2nd"/>
</dbReference>
<dbReference type="InterPro" id="IPR053925">
    <property type="entry name" value="RecX_HTH_3rd"/>
</dbReference>
<dbReference type="InterPro" id="IPR003783">
    <property type="entry name" value="Regulatory_RecX"/>
</dbReference>
<dbReference type="InterPro" id="IPR036388">
    <property type="entry name" value="WH-like_DNA-bd_sf"/>
</dbReference>
<dbReference type="NCBIfam" id="NF001052">
    <property type="entry name" value="PRK00117.1-1"/>
    <property type="match status" value="1"/>
</dbReference>
<dbReference type="PANTHER" id="PTHR33602">
    <property type="entry name" value="REGULATORY PROTEIN RECX FAMILY PROTEIN"/>
    <property type="match status" value="1"/>
</dbReference>
<dbReference type="PANTHER" id="PTHR33602:SF1">
    <property type="entry name" value="REGULATORY PROTEIN RECX FAMILY PROTEIN"/>
    <property type="match status" value="1"/>
</dbReference>
<dbReference type="Pfam" id="PF21982">
    <property type="entry name" value="RecX_HTH1"/>
    <property type="match status" value="1"/>
</dbReference>
<dbReference type="Pfam" id="PF02631">
    <property type="entry name" value="RecX_HTH2"/>
    <property type="match status" value="1"/>
</dbReference>
<dbReference type="Pfam" id="PF21981">
    <property type="entry name" value="RecX_HTH3"/>
    <property type="match status" value="1"/>
</dbReference>
<protein>
    <recommendedName>
        <fullName>Regulatory protein RecX</fullName>
    </recommendedName>
</protein>
<reference key="1">
    <citation type="journal article" date="2001" name="Nature">
        <title>Genome sequence of enterohaemorrhagic Escherichia coli O157:H7.</title>
        <authorList>
            <person name="Perna N.T."/>
            <person name="Plunkett G. III"/>
            <person name="Burland V."/>
            <person name="Mau B."/>
            <person name="Glasner J.D."/>
            <person name="Rose D.J."/>
            <person name="Mayhew G.F."/>
            <person name="Evans P.S."/>
            <person name="Gregor J."/>
            <person name="Kirkpatrick H.A."/>
            <person name="Posfai G."/>
            <person name="Hackett J."/>
            <person name="Klink S."/>
            <person name="Boutin A."/>
            <person name="Shao Y."/>
            <person name="Miller L."/>
            <person name="Grotbeck E.J."/>
            <person name="Davis N.W."/>
            <person name="Lim A."/>
            <person name="Dimalanta E.T."/>
            <person name="Potamousis K."/>
            <person name="Apodaca J."/>
            <person name="Anantharaman T.S."/>
            <person name="Lin J."/>
            <person name="Yen G."/>
            <person name="Schwartz D.C."/>
            <person name="Welch R.A."/>
            <person name="Blattner F.R."/>
        </authorList>
    </citation>
    <scope>NUCLEOTIDE SEQUENCE [LARGE SCALE GENOMIC DNA]</scope>
    <source>
        <strain>O157:H7 / EDL933 / ATCC 700927 / EHEC</strain>
    </source>
</reference>
<reference key="2">
    <citation type="journal article" date="2001" name="DNA Res.">
        <title>Complete genome sequence of enterohemorrhagic Escherichia coli O157:H7 and genomic comparison with a laboratory strain K-12.</title>
        <authorList>
            <person name="Hayashi T."/>
            <person name="Makino K."/>
            <person name="Ohnishi M."/>
            <person name="Kurokawa K."/>
            <person name="Ishii K."/>
            <person name="Yokoyama K."/>
            <person name="Han C.-G."/>
            <person name="Ohtsubo E."/>
            <person name="Nakayama K."/>
            <person name="Murata T."/>
            <person name="Tanaka M."/>
            <person name="Tobe T."/>
            <person name="Iida T."/>
            <person name="Takami H."/>
            <person name="Honda T."/>
            <person name="Sasakawa C."/>
            <person name="Ogasawara N."/>
            <person name="Yasunaga T."/>
            <person name="Kuhara S."/>
            <person name="Shiba T."/>
            <person name="Hattori M."/>
            <person name="Shinagawa H."/>
        </authorList>
    </citation>
    <scope>NUCLEOTIDE SEQUENCE [LARGE SCALE GENOMIC DNA]</scope>
    <source>
        <strain>O157:H7 / Sakai / RIMD 0509952 / EHEC</strain>
    </source>
</reference>
<keyword id="KW-0002">3D-structure</keyword>
<keyword id="KW-0963">Cytoplasm</keyword>
<keyword id="KW-0227">DNA damage</keyword>
<keyword id="KW-0234">DNA repair</keyword>
<keyword id="KW-1185">Reference proteome</keyword>
<keyword id="KW-0742">SOS response</keyword>
<comment type="function">
    <text evidence="1">Modulates RecA activity through direct physical interaction. Can inhibit both RecA recombinase and coprotease activities. May have a regulatory role during the SOS response. Inhibits DNA strand exchange in vitro (By similarity).</text>
</comment>
<comment type="subcellular location">
    <subcellularLocation>
        <location evidence="2">Cytoplasm</location>
    </subcellularLocation>
</comment>
<comment type="similarity">
    <text evidence="2">Belongs to the RecX family.</text>
</comment>
<gene>
    <name type="primary">recX</name>
    <name type="ordered locus">Z4001</name>
    <name type="ordered locus">ECs3555</name>
</gene>